<organism>
    <name type="scientific">Staphylococcus epidermidis (strain ATCC 35984 / DSM 28319 / BCRC 17069 / CCUG 31568 / BM 3577 / RP62A)</name>
    <dbReference type="NCBI Taxonomy" id="176279"/>
    <lineage>
        <taxon>Bacteria</taxon>
        <taxon>Bacillati</taxon>
        <taxon>Bacillota</taxon>
        <taxon>Bacilli</taxon>
        <taxon>Bacillales</taxon>
        <taxon>Staphylococcaceae</taxon>
        <taxon>Staphylococcus</taxon>
    </lineage>
</organism>
<protein>
    <recommendedName>
        <fullName>Putative peptidyl-prolyl cis-trans isomerase</fullName>
        <shortName>PPIase</shortName>
        <ecNumber>5.2.1.8</ecNumber>
    </recommendedName>
    <alternativeName>
        <fullName>Rotamase</fullName>
    </alternativeName>
</protein>
<keyword id="KW-0413">Isomerase</keyword>
<keyword id="KW-1185">Reference proteome</keyword>
<keyword id="KW-0697">Rotamase</keyword>
<comment type="function">
    <text evidence="1">PPIases accelerate the folding of proteins. It catalyzes the cis-trans isomerization of proline imidic peptide bonds in oligopeptides (By similarity).</text>
</comment>
<comment type="catalytic activity">
    <reaction>
        <text>[protein]-peptidylproline (omega=180) = [protein]-peptidylproline (omega=0)</text>
        <dbReference type="Rhea" id="RHEA:16237"/>
        <dbReference type="Rhea" id="RHEA-COMP:10747"/>
        <dbReference type="Rhea" id="RHEA-COMP:10748"/>
        <dbReference type="ChEBI" id="CHEBI:83833"/>
        <dbReference type="ChEBI" id="CHEBI:83834"/>
        <dbReference type="EC" id="5.2.1.8"/>
    </reaction>
</comment>
<comment type="similarity">
    <text evidence="3">Belongs to the cyclophilin-type PPIase family.</text>
</comment>
<sequence length="197" mass="21726">MTNYPQLNKEIQDNEIKVVMHTNKGDMTFKLFPDIAPKTVENFVTHSKNGYYDGVTFHRVINDFMVQGGDPTATGMGGESIYGSAFEDEFSLEAFNLYGALSMANAGPNTNGSQFFIVQMKEVPENMLSQLADGGWPQPIVEAYGEKGGTPWLDQKHTVFGQLIEGESTLEDIANTKVGAQDKPVYDVVIESIDVEE</sequence>
<reference key="1">
    <citation type="journal article" date="2005" name="J. Bacteriol.">
        <title>Insights on evolution of virulence and resistance from the complete genome analysis of an early methicillin-resistant Staphylococcus aureus strain and a biofilm-producing methicillin-resistant Staphylococcus epidermidis strain.</title>
        <authorList>
            <person name="Gill S.R."/>
            <person name="Fouts D.E."/>
            <person name="Archer G.L."/>
            <person name="Mongodin E.F."/>
            <person name="DeBoy R.T."/>
            <person name="Ravel J."/>
            <person name="Paulsen I.T."/>
            <person name="Kolonay J.F."/>
            <person name="Brinkac L.M."/>
            <person name="Beanan M.J."/>
            <person name="Dodson R.J."/>
            <person name="Daugherty S.C."/>
            <person name="Madupu R."/>
            <person name="Angiuoli S.V."/>
            <person name="Durkin A.S."/>
            <person name="Haft D.H."/>
            <person name="Vamathevan J.J."/>
            <person name="Khouri H."/>
            <person name="Utterback T.R."/>
            <person name="Lee C."/>
            <person name="Dimitrov G."/>
            <person name="Jiang L."/>
            <person name="Qin H."/>
            <person name="Weidman J."/>
            <person name="Tran K."/>
            <person name="Kang K.H."/>
            <person name="Hance I.R."/>
            <person name="Nelson K.E."/>
            <person name="Fraser C.M."/>
        </authorList>
    </citation>
    <scope>NUCLEOTIDE SEQUENCE [LARGE SCALE GENOMIC DNA]</scope>
    <source>
        <strain>ATCC 35984 / DSM 28319 / BCRC 17069 / CCUG 31568 / BM 3577 / RP62A</strain>
    </source>
</reference>
<gene>
    <name type="ordered locus">SERP0540</name>
</gene>
<proteinExistence type="inferred from homology"/>
<name>PPI1_STAEQ</name>
<feature type="chain" id="PRO_0000299088" description="Putative peptidyl-prolyl cis-trans isomerase">
    <location>
        <begin position="1"/>
        <end position="197"/>
    </location>
</feature>
<feature type="domain" description="PPIase cyclophilin-type" evidence="2">
    <location>
        <begin position="14"/>
        <end position="195"/>
    </location>
</feature>
<evidence type="ECO:0000250" key="1"/>
<evidence type="ECO:0000255" key="2">
    <source>
        <dbReference type="PROSITE-ProRule" id="PRU00156"/>
    </source>
</evidence>
<evidence type="ECO:0000305" key="3"/>
<dbReference type="EC" id="5.2.1.8"/>
<dbReference type="EMBL" id="CP000029">
    <property type="protein sequence ID" value="AAW53903.1"/>
    <property type="molecule type" value="Genomic_DNA"/>
</dbReference>
<dbReference type="RefSeq" id="WP_001831922.1">
    <property type="nucleotide sequence ID" value="NC_002976.3"/>
</dbReference>
<dbReference type="SMR" id="Q5HQK8"/>
<dbReference type="STRING" id="176279.SERP0540"/>
<dbReference type="KEGG" id="ser:SERP0540"/>
<dbReference type="eggNOG" id="COG0652">
    <property type="taxonomic scope" value="Bacteria"/>
</dbReference>
<dbReference type="HOGENOM" id="CLU_012062_16_0_9"/>
<dbReference type="Proteomes" id="UP000000531">
    <property type="component" value="Chromosome"/>
</dbReference>
<dbReference type="GO" id="GO:0003755">
    <property type="term" value="F:peptidyl-prolyl cis-trans isomerase activity"/>
    <property type="evidence" value="ECO:0007669"/>
    <property type="project" value="UniProtKB-KW"/>
</dbReference>
<dbReference type="GO" id="GO:0006457">
    <property type="term" value="P:protein folding"/>
    <property type="evidence" value="ECO:0007669"/>
    <property type="project" value="InterPro"/>
</dbReference>
<dbReference type="Gene3D" id="2.40.100.10">
    <property type="entry name" value="Cyclophilin-like"/>
    <property type="match status" value="1"/>
</dbReference>
<dbReference type="InterPro" id="IPR029000">
    <property type="entry name" value="Cyclophilin-like_dom_sf"/>
</dbReference>
<dbReference type="InterPro" id="IPR024936">
    <property type="entry name" value="Cyclophilin-type_PPIase"/>
</dbReference>
<dbReference type="InterPro" id="IPR020892">
    <property type="entry name" value="Cyclophilin-type_PPIase_CS"/>
</dbReference>
<dbReference type="InterPro" id="IPR002130">
    <property type="entry name" value="Cyclophilin-type_PPIase_dom"/>
</dbReference>
<dbReference type="InterPro" id="IPR044666">
    <property type="entry name" value="Cyclophilin_A-like"/>
</dbReference>
<dbReference type="PANTHER" id="PTHR45625">
    <property type="entry name" value="PEPTIDYL-PROLYL CIS-TRANS ISOMERASE-RELATED"/>
    <property type="match status" value="1"/>
</dbReference>
<dbReference type="PANTHER" id="PTHR45625:SF4">
    <property type="entry name" value="PEPTIDYLPROLYL ISOMERASE DOMAIN AND WD REPEAT-CONTAINING PROTEIN 1"/>
    <property type="match status" value="1"/>
</dbReference>
<dbReference type="Pfam" id="PF00160">
    <property type="entry name" value="Pro_isomerase"/>
    <property type="match status" value="1"/>
</dbReference>
<dbReference type="PIRSF" id="PIRSF001467">
    <property type="entry name" value="Peptidylpro_ismrse"/>
    <property type="match status" value="1"/>
</dbReference>
<dbReference type="PRINTS" id="PR00153">
    <property type="entry name" value="CSAPPISMRASE"/>
</dbReference>
<dbReference type="SUPFAM" id="SSF50891">
    <property type="entry name" value="Cyclophilin-like"/>
    <property type="match status" value="1"/>
</dbReference>
<dbReference type="PROSITE" id="PS00170">
    <property type="entry name" value="CSA_PPIASE_1"/>
    <property type="match status" value="1"/>
</dbReference>
<dbReference type="PROSITE" id="PS50072">
    <property type="entry name" value="CSA_PPIASE_2"/>
    <property type="match status" value="1"/>
</dbReference>
<accession>Q5HQK8</accession>